<accession>A4SLX1</accession>
<proteinExistence type="inferred from homology"/>
<dbReference type="EMBL" id="CP000644">
    <property type="protein sequence ID" value="ABO89893.1"/>
    <property type="molecule type" value="Genomic_DNA"/>
</dbReference>
<dbReference type="STRING" id="29491.GCA_000820065_03081"/>
<dbReference type="KEGG" id="asa:ASA_1816"/>
<dbReference type="PATRIC" id="fig|382245.13.peg.1799"/>
<dbReference type="eggNOG" id="COG3158">
    <property type="taxonomic scope" value="Bacteria"/>
</dbReference>
<dbReference type="HOGENOM" id="CLU_008142_4_2_6"/>
<dbReference type="Proteomes" id="UP000000225">
    <property type="component" value="Chromosome"/>
</dbReference>
<dbReference type="GO" id="GO:0005886">
    <property type="term" value="C:plasma membrane"/>
    <property type="evidence" value="ECO:0007669"/>
    <property type="project" value="UniProtKB-SubCell"/>
</dbReference>
<dbReference type="GO" id="GO:0015079">
    <property type="term" value="F:potassium ion transmembrane transporter activity"/>
    <property type="evidence" value="ECO:0007669"/>
    <property type="project" value="UniProtKB-UniRule"/>
</dbReference>
<dbReference type="GO" id="GO:0015293">
    <property type="term" value="F:symporter activity"/>
    <property type="evidence" value="ECO:0007669"/>
    <property type="project" value="UniProtKB-UniRule"/>
</dbReference>
<dbReference type="HAMAP" id="MF_01522">
    <property type="entry name" value="Kup"/>
    <property type="match status" value="1"/>
</dbReference>
<dbReference type="InterPro" id="IPR003855">
    <property type="entry name" value="K+_transporter"/>
</dbReference>
<dbReference type="InterPro" id="IPR053952">
    <property type="entry name" value="K_trans_C"/>
</dbReference>
<dbReference type="InterPro" id="IPR053951">
    <property type="entry name" value="K_trans_N"/>
</dbReference>
<dbReference type="InterPro" id="IPR023051">
    <property type="entry name" value="Kup"/>
</dbReference>
<dbReference type="NCBIfam" id="TIGR00794">
    <property type="entry name" value="kup"/>
    <property type="match status" value="1"/>
</dbReference>
<dbReference type="NCBIfam" id="NF008015">
    <property type="entry name" value="PRK10745.1"/>
    <property type="match status" value="1"/>
</dbReference>
<dbReference type="PANTHER" id="PTHR30540:SF79">
    <property type="entry name" value="LOW AFFINITY POTASSIUM TRANSPORT SYSTEM PROTEIN KUP"/>
    <property type="match status" value="1"/>
</dbReference>
<dbReference type="PANTHER" id="PTHR30540">
    <property type="entry name" value="OSMOTIC STRESS POTASSIUM TRANSPORTER"/>
    <property type="match status" value="1"/>
</dbReference>
<dbReference type="Pfam" id="PF02705">
    <property type="entry name" value="K_trans"/>
    <property type="match status" value="1"/>
</dbReference>
<dbReference type="Pfam" id="PF22776">
    <property type="entry name" value="K_trans_C"/>
    <property type="match status" value="1"/>
</dbReference>
<organism>
    <name type="scientific">Aeromonas salmonicida (strain A449)</name>
    <dbReference type="NCBI Taxonomy" id="382245"/>
    <lineage>
        <taxon>Bacteria</taxon>
        <taxon>Pseudomonadati</taxon>
        <taxon>Pseudomonadota</taxon>
        <taxon>Gammaproteobacteria</taxon>
        <taxon>Aeromonadales</taxon>
        <taxon>Aeromonadaceae</taxon>
        <taxon>Aeromonas</taxon>
    </lineage>
</organism>
<feature type="chain" id="PRO_0000292615" description="Probable potassium transport system protein Kup">
    <location>
        <begin position="1"/>
        <end position="608"/>
    </location>
</feature>
<feature type="transmembrane region" description="Helical" evidence="1">
    <location>
        <begin position="9"/>
        <end position="29"/>
    </location>
</feature>
<feature type="transmembrane region" description="Helical" evidence="1">
    <location>
        <begin position="46"/>
        <end position="66"/>
    </location>
</feature>
<feature type="transmembrane region" description="Helical" evidence="1">
    <location>
        <begin position="99"/>
        <end position="119"/>
    </location>
</feature>
<feature type="transmembrane region" description="Helical" evidence="1">
    <location>
        <begin position="137"/>
        <end position="157"/>
    </location>
</feature>
<feature type="transmembrane region" description="Helical" evidence="1">
    <location>
        <begin position="165"/>
        <end position="185"/>
    </location>
</feature>
<feature type="transmembrane region" description="Helical" evidence="1">
    <location>
        <begin position="213"/>
        <end position="233"/>
    </location>
</feature>
<feature type="transmembrane region" description="Helical" evidence="1">
    <location>
        <begin position="247"/>
        <end position="267"/>
    </location>
</feature>
<feature type="transmembrane region" description="Helical" evidence="1">
    <location>
        <begin position="285"/>
        <end position="305"/>
    </location>
</feature>
<feature type="transmembrane region" description="Helical" evidence="1">
    <location>
        <begin position="337"/>
        <end position="357"/>
    </location>
</feature>
<feature type="transmembrane region" description="Helical" evidence="1">
    <location>
        <begin position="363"/>
        <end position="383"/>
    </location>
</feature>
<feature type="transmembrane region" description="Helical" evidence="1">
    <location>
        <begin position="396"/>
        <end position="416"/>
    </location>
</feature>
<feature type="transmembrane region" description="Helical" evidence="1">
    <location>
        <begin position="419"/>
        <end position="439"/>
    </location>
</feature>
<comment type="function">
    <text evidence="1">Transport of potassium into the cell. Likely operates as a K(+):H(+) symporter.</text>
</comment>
<comment type="catalytic activity">
    <reaction evidence="1">
        <text>K(+)(in) + H(+)(in) = K(+)(out) + H(+)(out)</text>
        <dbReference type="Rhea" id="RHEA:28490"/>
        <dbReference type="ChEBI" id="CHEBI:15378"/>
        <dbReference type="ChEBI" id="CHEBI:29103"/>
    </reaction>
    <physiologicalReaction direction="right-to-left" evidence="1">
        <dbReference type="Rhea" id="RHEA:28492"/>
    </physiologicalReaction>
</comment>
<comment type="subcellular location">
    <subcellularLocation>
        <location evidence="1">Cell inner membrane</location>
        <topology evidence="1">Multi-pass membrane protein</topology>
    </subcellularLocation>
</comment>
<comment type="similarity">
    <text evidence="1">Belongs to the HAK/KUP transporter (TC 2.A.72) family.</text>
</comment>
<protein>
    <recommendedName>
        <fullName evidence="1">Probable potassium transport system protein Kup</fullName>
    </recommendedName>
</protein>
<name>KUP_AERS4</name>
<gene>
    <name evidence="1" type="primary">kup</name>
    <name type="ordered locus">ASA_1816</name>
</gene>
<sequence length="608" mass="66608">MSCDNKQALSGVTLAAIGVVYGDIGTSPLYTLRECLSGQFGIRAEPAAILGFLSLIFWLLILVVSVKYLSFVMRADNAGEGGILTLMSLATRNASPRWTPVLIILGLIGGSFFYGEVVITPAMSVMSAIEGLSLMAPSLDPYIVPLSVLVLTLLFAIQKHGTAMVGKLFAPIMLTWFLTLAVLGLRSIIQNPEVLGALNPIWALRFFAEYQTTSFFALGAVVLAITGVEALYADMGHFGKNPIRLAWFVVVLPSLVLNYFGQGALLLDNPAAIANPFFLLAPKWALLPLLVLATMATVIASQAVISGVFSLTRQAVRLGYLSPIRIVHTSEQESGQIYIPVINWILYISVVIVIMSFEHSSNLAAAYGIAVTGTMVLTSILFCSVAKNSWHWPTYLVAALFALLLAIDVPLFAANLGKIFSGGWLPLTLGAVMFTLMTSWKSERFQLIRRLNEHGNSLEPMIASLEKSPPTRVAGTAVYMSRVVNVIPHALLHNLKHNKVLHERIILLTLRVEDVPYVHNVRRVCIEQLSPTFWRVVASYGWRETPNMEEIFHRCNAEGLSCRMMETSFFMAHESLIMKERPCAANCLCCCSATPCAQRISSRSRPIG</sequence>
<reference key="1">
    <citation type="journal article" date="2008" name="BMC Genomics">
        <title>The genome of Aeromonas salmonicida subsp. salmonicida A449: insights into the evolution of a fish pathogen.</title>
        <authorList>
            <person name="Reith M.E."/>
            <person name="Singh R.K."/>
            <person name="Curtis B."/>
            <person name="Boyd J.M."/>
            <person name="Bouevitch A."/>
            <person name="Kimball J."/>
            <person name="Munholland J."/>
            <person name="Murphy C."/>
            <person name="Sarty D."/>
            <person name="Williams J."/>
            <person name="Nash J.H."/>
            <person name="Johnson S.C."/>
            <person name="Brown L.L."/>
        </authorList>
    </citation>
    <scope>NUCLEOTIDE SEQUENCE [LARGE SCALE GENOMIC DNA]</scope>
    <source>
        <strain>A449</strain>
    </source>
</reference>
<keyword id="KW-0997">Cell inner membrane</keyword>
<keyword id="KW-1003">Cell membrane</keyword>
<keyword id="KW-0406">Ion transport</keyword>
<keyword id="KW-0472">Membrane</keyword>
<keyword id="KW-0630">Potassium</keyword>
<keyword id="KW-0633">Potassium transport</keyword>
<keyword id="KW-0769">Symport</keyword>
<keyword id="KW-0812">Transmembrane</keyword>
<keyword id="KW-1133">Transmembrane helix</keyword>
<keyword id="KW-0813">Transport</keyword>
<evidence type="ECO:0000255" key="1">
    <source>
        <dbReference type="HAMAP-Rule" id="MF_01522"/>
    </source>
</evidence>